<name>Y237_LACLS</name>
<dbReference type="EMBL" id="CP000425">
    <property type="protein sequence ID" value="ABJ71855.1"/>
    <property type="molecule type" value="Genomic_DNA"/>
</dbReference>
<dbReference type="RefSeq" id="WP_011675268.1">
    <property type="nucleotide sequence ID" value="NC_008527.1"/>
</dbReference>
<dbReference type="SMR" id="Q032L7"/>
<dbReference type="KEGG" id="llc:LACR_0237"/>
<dbReference type="HOGENOM" id="CLU_062974_2_0_9"/>
<dbReference type="Proteomes" id="UP000000240">
    <property type="component" value="Chromosome"/>
</dbReference>
<dbReference type="GO" id="GO:0005829">
    <property type="term" value="C:cytosol"/>
    <property type="evidence" value="ECO:0007669"/>
    <property type="project" value="TreeGrafter"/>
</dbReference>
<dbReference type="GO" id="GO:0003677">
    <property type="term" value="F:DNA binding"/>
    <property type="evidence" value="ECO:0007669"/>
    <property type="project" value="UniProtKB-UniRule"/>
</dbReference>
<dbReference type="GO" id="GO:0006355">
    <property type="term" value="P:regulation of DNA-templated transcription"/>
    <property type="evidence" value="ECO:0007669"/>
    <property type="project" value="UniProtKB-UniRule"/>
</dbReference>
<dbReference type="FunFam" id="1.10.10.200:FF:000003">
    <property type="entry name" value="Probable transcriptional regulatory protein YeeN"/>
    <property type="match status" value="1"/>
</dbReference>
<dbReference type="FunFam" id="3.30.70.980:FF:000004">
    <property type="entry name" value="Probable transcriptional regulatory protein YeeN"/>
    <property type="match status" value="1"/>
</dbReference>
<dbReference type="Gene3D" id="1.10.10.200">
    <property type="match status" value="1"/>
</dbReference>
<dbReference type="Gene3D" id="3.30.70.980">
    <property type="match status" value="2"/>
</dbReference>
<dbReference type="HAMAP" id="MF_00693">
    <property type="entry name" value="Transcrip_reg_TACO1"/>
    <property type="match status" value="1"/>
</dbReference>
<dbReference type="HAMAP" id="MF_00918">
    <property type="entry name" value="Transcrip_reg_TACO1_YeeN"/>
    <property type="match status" value="1"/>
</dbReference>
<dbReference type="InterPro" id="IPR017856">
    <property type="entry name" value="Integrase-like_N"/>
</dbReference>
<dbReference type="InterPro" id="IPR048300">
    <property type="entry name" value="TACO1_YebC-like_2nd/3rd_dom"/>
</dbReference>
<dbReference type="InterPro" id="IPR049083">
    <property type="entry name" value="TACO1_YebC_N"/>
</dbReference>
<dbReference type="InterPro" id="IPR002876">
    <property type="entry name" value="Transcrip_reg_TACO1-like"/>
</dbReference>
<dbReference type="InterPro" id="IPR026564">
    <property type="entry name" value="Transcrip_reg_TACO1-like_dom3"/>
</dbReference>
<dbReference type="InterPro" id="IPR026562">
    <property type="entry name" value="Transcrip_reg_TACO1_YeeN"/>
</dbReference>
<dbReference type="InterPro" id="IPR029072">
    <property type="entry name" value="YebC-like"/>
</dbReference>
<dbReference type="NCBIfam" id="NF009044">
    <property type="entry name" value="PRK12378.1"/>
    <property type="match status" value="1"/>
</dbReference>
<dbReference type="NCBIfam" id="TIGR01033">
    <property type="entry name" value="YebC/PmpR family DNA-binding transcriptional regulator"/>
    <property type="match status" value="1"/>
</dbReference>
<dbReference type="PANTHER" id="PTHR12532">
    <property type="entry name" value="TRANSLATIONAL ACTIVATOR OF CYTOCHROME C OXIDASE 1"/>
    <property type="match status" value="1"/>
</dbReference>
<dbReference type="PANTHER" id="PTHR12532:SF0">
    <property type="entry name" value="TRANSLATIONAL ACTIVATOR OF CYTOCHROME C OXIDASE 1"/>
    <property type="match status" value="1"/>
</dbReference>
<dbReference type="Pfam" id="PF20772">
    <property type="entry name" value="TACO1_YebC_N"/>
    <property type="match status" value="1"/>
</dbReference>
<dbReference type="Pfam" id="PF01709">
    <property type="entry name" value="Transcrip_reg"/>
    <property type="match status" value="1"/>
</dbReference>
<dbReference type="SUPFAM" id="SSF75625">
    <property type="entry name" value="YebC-like"/>
    <property type="match status" value="1"/>
</dbReference>
<gene>
    <name type="ordered locus">LACR_0237</name>
</gene>
<protein>
    <recommendedName>
        <fullName evidence="1">Probable transcriptional regulatory protein LACR_0237</fullName>
    </recommendedName>
</protein>
<reference key="1">
    <citation type="journal article" date="2006" name="Proc. Natl. Acad. Sci. U.S.A.">
        <title>Comparative genomics of the lactic acid bacteria.</title>
        <authorList>
            <person name="Makarova K.S."/>
            <person name="Slesarev A."/>
            <person name="Wolf Y.I."/>
            <person name="Sorokin A."/>
            <person name="Mirkin B."/>
            <person name="Koonin E.V."/>
            <person name="Pavlov A."/>
            <person name="Pavlova N."/>
            <person name="Karamychev V."/>
            <person name="Polouchine N."/>
            <person name="Shakhova V."/>
            <person name="Grigoriev I."/>
            <person name="Lou Y."/>
            <person name="Rohksar D."/>
            <person name="Lucas S."/>
            <person name="Huang K."/>
            <person name="Goodstein D.M."/>
            <person name="Hawkins T."/>
            <person name="Plengvidhya V."/>
            <person name="Welker D."/>
            <person name="Hughes J."/>
            <person name="Goh Y."/>
            <person name="Benson A."/>
            <person name="Baldwin K."/>
            <person name="Lee J.-H."/>
            <person name="Diaz-Muniz I."/>
            <person name="Dosti B."/>
            <person name="Smeianov V."/>
            <person name="Wechter W."/>
            <person name="Barabote R."/>
            <person name="Lorca G."/>
            <person name="Altermann E."/>
            <person name="Barrangou R."/>
            <person name="Ganesan B."/>
            <person name="Xie Y."/>
            <person name="Rawsthorne H."/>
            <person name="Tamir D."/>
            <person name="Parker C."/>
            <person name="Breidt F."/>
            <person name="Broadbent J.R."/>
            <person name="Hutkins R."/>
            <person name="O'Sullivan D."/>
            <person name="Steele J."/>
            <person name="Unlu G."/>
            <person name="Saier M.H. Jr."/>
            <person name="Klaenhammer T."/>
            <person name="Richardson P."/>
            <person name="Kozyavkin S."/>
            <person name="Weimer B.C."/>
            <person name="Mills D.A."/>
        </authorList>
    </citation>
    <scope>NUCLEOTIDE SEQUENCE [LARGE SCALE GENOMIC DNA]</scope>
    <source>
        <strain>SK11</strain>
    </source>
</reference>
<accession>Q032L7</accession>
<comment type="subcellular location">
    <subcellularLocation>
        <location evidence="1">Cytoplasm</location>
    </subcellularLocation>
</comment>
<comment type="similarity">
    <text evidence="1">Belongs to the TACO1 family. YeeN subfamily.</text>
</comment>
<sequence>MGRKWANIVAKKTAKDGATSKVYAKFGVEIYAAAKQGEPDPESNSSLKFVIERAKQAQVPKHVIDKAIDKAKGGGDETFVQGRYEGFGPNGSMVIAETLTSNVNRTIANVRTTFHKNGGNIGAAGAVSYMFDNTGVIVFEGTDPDHIFEILLDAEVDVRDVTEEEGNIVVYTEPTDLHKGIAALKAAGITEFSTTELEMIAQSEVELSPEDLEIFEGLIDALEDDDDVQKVYHNVANL</sequence>
<proteinExistence type="inferred from homology"/>
<organism>
    <name type="scientific">Lactococcus lactis subsp. cremoris (strain SK11)</name>
    <dbReference type="NCBI Taxonomy" id="272622"/>
    <lineage>
        <taxon>Bacteria</taxon>
        <taxon>Bacillati</taxon>
        <taxon>Bacillota</taxon>
        <taxon>Bacilli</taxon>
        <taxon>Lactobacillales</taxon>
        <taxon>Streptococcaceae</taxon>
        <taxon>Lactococcus</taxon>
        <taxon>Lactococcus cremoris subsp. cremoris</taxon>
    </lineage>
</organism>
<evidence type="ECO:0000255" key="1">
    <source>
        <dbReference type="HAMAP-Rule" id="MF_00918"/>
    </source>
</evidence>
<feature type="chain" id="PRO_1000045328" description="Probable transcriptional regulatory protein LACR_0237">
    <location>
        <begin position="1"/>
        <end position="238"/>
    </location>
</feature>
<keyword id="KW-0963">Cytoplasm</keyword>
<keyword id="KW-0238">DNA-binding</keyword>
<keyword id="KW-0804">Transcription</keyword>
<keyword id="KW-0805">Transcription regulation</keyword>